<evidence type="ECO:0000250" key="1"/>
<evidence type="ECO:0000255" key="2"/>
<evidence type="ECO:0000256" key="3">
    <source>
        <dbReference type="SAM" id="MobiDB-lite"/>
    </source>
</evidence>
<evidence type="ECO:0000305" key="4"/>
<feature type="chain" id="PRO_0000143133" description="Bestrophin homolog 18">
    <location>
        <begin position="1"/>
        <end position="456"/>
    </location>
</feature>
<feature type="transmembrane region" description="Helical" evidence="2">
    <location>
        <begin position="29"/>
        <end position="49"/>
    </location>
</feature>
<feature type="transmembrane region" description="Helical" evidence="2">
    <location>
        <begin position="83"/>
        <end position="103"/>
    </location>
</feature>
<feature type="transmembrane region" description="Helical" evidence="2">
    <location>
        <begin position="234"/>
        <end position="254"/>
    </location>
</feature>
<feature type="transmembrane region" description="Helical" evidence="2">
    <location>
        <begin position="267"/>
        <end position="287"/>
    </location>
</feature>
<feature type="region of interest" description="Disordered" evidence="3">
    <location>
        <begin position="416"/>
        <end position="456"/>
    </location>
</feature>
<name>BST18_CAEEL</name>
<organism>
    <name type="scientific">Caenorhabditis elegans</name>
    <dbReference type="NCBI Taxonomy" id="6239"/>
    <lineage>
        <taxon>Eukaryota</taxon>
        <taxon>Metazoa</taxon>
        <taxon>Ecdysozoa</taxon>
        <taxon>Nematoda</taxon>
        <taxon>Chromadorea</taxon>
        <taxon>Rhabditida</taxon>
        <taxon>Rhabditina</taxon>
        <taxon>Rhabditomorpha</taxon>
        <taxon>Rhabditoidea</taxon>
        <taxon>Rhabditidae</taxon>
        <taxon>Peloderinae</taxon>
        <taxon>Caenorhabditis</taxon>
    </lineage>
</organism>
<dbReference type="EMBL" id="Z30423">
    <property type="protein sequence ID" value="CAA83005.2"/>
    <property type="molecule type" value="Genomic_DNA"/>
</dbReference>
<dbReference type="PIR" id="S42371">
    <property type="entry name" value="S42371"/>
</dbReference>
<dbReference type="RefSeq" id="NP_001255067.1">
    <property type="nucleotide sequence ID" value="NM_001268138.2"/>
</dbReference>
<dbReference type="SMR" id="P34577"/>
<dbReference type="FunCoup" id="P34577">
    <property type="interactions" value="666"/>
</dbReference>
<dbReference type="STRING" id="6239.T20G5.4a.1"/>
<dbReference type="PaxDb" id="6239-T20G5.4a"/>
<dbReference type="EnsemblMetazoa" id="T20G5.4a.1">
    <property type="protein sequence ID" value="T20G5.4a.1"/>
    <property type="gene ID" value="WBGene00011868"/>
</dbReference>
<dbReference type="GeneID" id="176436"/>
<dbReference type="KEGG" id="cel:CELE_T20G5.4"/>
<dbReference type="UCSC" id="T20G5.4">
    <property type="organism name" value="c. elegans"/>
</dbReference>
<dbReference type="AGR" id="WB:WBGene00011868"/>
<dbReference type="CTD" id="176436"/>
<dbReference type="WormBase" id="T20G5.4a">
    <property type="protein sequence ID" value="CE28844"/>
    <property type="gene ID" value="WBGene00011868"/>
    <property type="gene designation" value="best-18"/>
</dbReference>
<dbReference type="eggNOG" id="KOG3547">
    <property type="taxonomic scope" value="Eukaryota"/>
</dbReference>
<dbReference type="HOGENOM" id="CLU_018069_7_1_1"/>
<dbReference type="InParanoid" id="P34577"/>
<dbReference type="OMA" id="FIDNIAC"/>
<dbReference type="OrthoDB" id="201595at2759"/>
<dbReference type="PhylomeDB" id="P34577"/>
<dbReference type="PRO" id="PR:P34577"/>
<dbReference type="Proteomes" id="UP000001940">
    <property type="component" value="Chromosome III"/>
</dbReference>
<dbReference type="Bgee" id="WBGene00011868">
    <property type="expression patterns" value="Expressed in larva and 3 other cell types or tissues"/>
</dbReference>
<dbReference type="ExpressionAtlas" id="P34577">
    <property type="expression patterns" value="baseline and differential"/>
</dbReference>
<dbReference type="GO" id="GO:0034707">
    <property type="term" value="C:chloride channel complex"/>
    <property type="evidence" value="ECO:0007669"/>
    <property type="project" value="UniProtKB-KW"/>
</dbReference>
<dbReference type="GO" id="GO:0005886">
    <property type="term" value="C:plasma membrane"/>
    <property type="evidence" value="ECO:0007669"/>
    <property type="project" value="UniProtKB-SubCell"/>
</dbReference>
<dbReference type="GO" id="GO:0005254">
    <property type="term" value="F:chloride channel activity"/>
    <property type="evidence" value="ECO:0000318"/>
    <property type="project" value="GO_Central"/>
</dbReference>
<dbReference type="InterPro" id="IPR000615">
    <property type="entry name" value="Bestrophin"/>
</dbReference>
<dbReference type="InterPro" id="IPR021134">
    <property type="entry name" value="Bestrophin-like"/>
</dbReference>
<dbReference type="PANTHER" id="PTHR10736">
    <property type="entry name" value="BESTROPHIN"/>
    <property type="match status" value="1"/>
</dbReference>
<dbReference type="PANTHER" id="PTHR10736:SF24">
    <property type="entry name" value="BESTROPHIN HOMOLOG 18"/>
    <property type="match status" value="1"/>
</dbReference>
<dbReference type="Pfam" id="PF01062">
    <property type="entry name" value="Bestrophin"/>
    <property type="match status" value="1"/>
</dbReference>
<comment type="function">
    <text evidence="1">Forms chloride channels.</text>
</comment>
<comment type="subunit">
    <text evidence="1">Forms oligomers.</text>
</comment>
<comment type="subcellular location">
    <subcellularLocation>
        <location evidence="1">Cell membrane</location>
        <topology evidence="1">Multi-pass membrane protein</topology>
    </subcellularLocation>
</comment>
<comment type="similarity">
    <text evidence="4">Belongs to the anion channel-forming bestrophin (TC 1.A.46) family. Calcium-sensitive chloride channel subfamily.</text>
</comment>
<keyword id="KW-1003">Cell membrane</keyword>
<keyword id="KW-0868">Chloride</keyword>
<keyword id="KW-0869">Chloride channel</keyword>
<keyword id="KW-0407">Ion channel</keyword>
<keyword id="KW-0406">Ion transport</keyword>
<keyword id="KW-0472">Membrane</keyword>
<keyword id="KW-1185">Reference proteome</keyword>
<keyword id="KW-0812">Transmembrane</keyword>
<keyword id="KW-1133">Transmembrane helix</keyword>
<keyword id="KW-0813">Transport</keyword>
<reference key="1">
    <citation type="journal article" date="1998" name="Science">
        <title>Genome sequence of the nematode C. elegans: a platform for investigating biology.</title>
        <authorList>
            <consortium name="The C. elegans sequencing consortium"/>
        </authorList>
    </citation>
    <scope>NUCLEOTIDE SEQUENCE [LARGE SCALE GENOMIC DNA]</scope>
    <source>
        <strain>Bristol N2</strain>
    </source>
</reference>
<gene>
    <name type="primary">best-18</name>
    <name type="ORF">T20G5.4</name>
</gene>
<protein>
    <recommendedName>
        <fullName>Bestrophin homolog 18</fullName>
    </recommendedName>
</protein>
<sequence>MTVSYNQSVATSRPWTFLALIFRWRGSVWSAIWIQYSVWLGLYFLVSAIYRFILSAYQQQIFVRLVDYVNSRMSYVPLDWMLGFFIAGVLRRFWYLYDIIGFIDNIACSTATYIRGDSERAKQYRRNIIRYCELTQVLIFRDLSMKARKRFPTLDTVAAAGFMMPHEKANFDLIQYNYNKYFLPFNWAWALVYNARKEGLIEGDYYVTVISEDIKKFRTGLAWVCNYDWVPLPIIYPTIVCLAVHMYFFVGILARQYVKGSEIDPDMIDLVFPFMTSIQFVFYMGWLKVGEGLLNPWGEDPDDFETNMLIDRNLAMGLKIVDEGYDKTPRLEKDAFWDDTWVPLYSEASAHEKRYHQRQGSLAHIKIGRSVSQVRMVPRDGRRASIVKERIVNVKPGSGIGDILRPSSLLNLMKHASSSRSLERQRSPGSFRMETLTPGSPTNTPIEPIDKIDKKK</sequence>
<accession>P34577</accession>
<proteinExistence type="inferred from homology"/>